<gene>
    <name evidence="1" type="primary">coaD</name>
    <name type="ordered locus">WS0612</name>
</gene>
<organism>
    <name type="scientific">Wolinella succinogenes (strain ATCC 29543 / DSM 1740 / CCUG 13145 / JCM 31913 / LMG 7466 / NCTC 11488 / FDC 602W)</name>
    <name type="common">Vibrio succinogenes</name>
    <dbReference type="NCBI Taxonomy" id="273121"/>
    <lineage>
        <taxon>Bacteria</taxon>
        <taxon>Pseudomonadati</taxon>
        <taxon>Campylobacterota</taxon>
        <taxon>Epsilonproteobacteria</taxon>
        <taxon>Campylobacterales</taxon>
        <taxon>Helicobacteraceae</taxon>
        <taxon>Wolinella</taxon>
    </lineage>
</organism>
<dbReference type="EC" id="2.7.7.3" evidence="1"/>
<dbReference type="EMBL" id="BX571658">
    <property type="protein sequence ID" value="CAE09743.1"/>
    <property type="molecule type" value="Genomic_DNA"/>
</dbReference>
<dbReference type="RefSeq" id="WP_011138543.1">
    <property type="nucleotide sequence ID" value="NC_005090.1"/>
</dbReference>
<dbReference type="SMR" id="Q7M9X2"/>
<dbReference type="STRING" id="273121.WS0612"/>
<dbReference type="KEGG" id="wsu:WS0612"/>
<dbReference type="eggNOG" id="COG0669">
    <property type="taxonomic scope" value="Bacteria"/>
</dbReference>
<dbReference type="HOGENOM" id="CLU_100149_0_1_7"/>
<dbReference type="UniPathway" id="UPA00241">
    <property type="reaction ID" value="UER00355"/>
</dbReference>
<dbReference type="Proteomes" id="UP000000422">
    <property type="component" value="Chromosome"/>
</dbReference>
<dbReference type="GO" id="GO:0005737">
    <property type="term" value="C:cytoplasm"/>
    <property type="evidence" value="ECO:0007669"/>
    <property type="project" value="UniProtKB-SubCell"/>
</dbReference>
<dbReference type="GO" id="GO:0005524">
    <property type="term" value="F:ATP binding"/>
    <property type="evidence" value="ECO:0007669"/>
    <property type="project" value="UniProtKB-KW"/>
</dbReference>
<dbReference type="GO" id="GO:0004595">
    <property type="term" value="F:pantetheine-phosphate adenylyltransferase activity"/>
    <property type="evidence" value="ECO:0007669"/>
    <property type="project" value="UniProtKB-UniRule"/>
</dbReference>
<dbReference type="GO" id="GO:0015937">
    <property type="term" value="P:coenzyme A biosynthetic process"/>
    <property type="evidence" value="ECO:0007669"/>
    <property type="project" value="UniProtKB-UniRule"/>
</dbReference>
<dbReference type="CDD" id="cd02163">
    <property type="entry name" value="PPAT"/>
    <property type="match status" value="1"/>
</dbReference>
<dbReference type="Gene3D" id="3.40.50.620">
    <property type="entry name" value="HUPs"/>
    <property type="match status" value="1"/>
</dbReference>
<dbReference type="HAMAP" id="MF_00151">
    <property type="entry name" value="PPAT_bact"/>
    <property type="match status" value="1"/>
</dbReference>
<dbReference type="InterPro" id="IPR004821">
    <property type="entry name" value="Cyt_trans-like"/>
</dbReference>
<dbReference type="InterPro" id="IPR001980">
    <property type="entry name" value="PPAT"/>
</dbReference>
<dbReference type="InterPro" id="IPR014729">
    <property type="entry name" value="Rossmann-like_a/b/a_fold"/>
</dbReference>
<dbReference type="NCBIfam" id="TIGR01510">
    <property type="entry name" value="coaD_prev_kdtB"/>
    <property type="match status" value="1"/>
</dbReference>
<dbReference type="NCBIfam" id="TIGR00125">
    <property type="entry name" value="cyt_tran_rel"/>
    <property type="match status" value="1"/>
</dbReference>
<dbReference type="PANTHER" id="PTHR21342">
    <property type="entry name" value="PHOSPHOPANTETHEINE ADENYLYLTRANSFERASE"/>
    <property type="match status" value="1"/>
</dbReference>
<dbReference type="PANTHER" id="PTHR21342:SF1">
    <property type="entry name" value="PHOSPHOPANTETHEINE ADENYLYLTRANSFERASE"/>
    <property type="match status" value="1"/>
</dbReference>
<dbReference type="Pfam" id="PF01467">
    <property type="entry name" value="CTP_transf_like"/>
    <property type="match status" value="1"/>
</dbReference>
<dbReference type="PRINTS" id="PR01020">
    <property type="entry name" value="LPSBIOSNTHSS"/>
</dbReference>
<dbReference type="SUPFAM" id="SSF52374">
    <property type="entry name" value="Nucleotidylyl transferase"/>
    <property type="match status" value="1"/>
</dbReference>
<accession>Q7M9X2</accession>
<keyword id="KW-0067">ATP-binding</keyword>
<keyword id="KW-0173">Coenzyme A biosynthesis</keyword>
<keyword id="KW-0963">Cytoplasm</keyword>
<keyword id="KW-0460">Magnesium</keyword>
<keyword id="KW-0547">Nucleotide-binding</keyword>
<keyword id="KW-0548">Nucleotidyltransferase</keyword>
<keyword id="KW-1185">Reference proteome</keyword>
<keyword id="KW-0808">Transferase</keyword>
<sequence>MHKTAIYPGTFDPLTNGHMDIIRRASMIFDTLIVAVAKSATKEPMFPLSEREEMLRLATRECPSVRVESFDTLLADFAQERGACILVRGLRAVSDFEYELQMGYANASLNPALETIYLMPSLQNAFISSSVIRSILLHKGKISHLVPPVVCEYIQKRRSCM</sequence>
<proteinExistence type="inferred from homology"/>
<feature type="chain" id="PRO_0000156310" description="Phosphopantetheine adenylyltransferase">
    <location>
        <begin position="1"/>
        <end position="161"/>
    </location>
</feature>
<feature type="binding site" evidence="1">
    <location>
        <begin position="10"/>
        <end position="11"/>
    </location>
    <ligand>
        <name>ATP</name>
        <dbReference type="ChEBI" id="CHEBI:30616"/>
    </ligand>
</feature>
<feature type="binding site" evidence="1">
    <location>
        <position position="10"/>
    </location>
    <ligand>
        <name>substrate</name>
    </ligand>
</feature>
<feature type="binding site" evidence="1">
    <location>
        <position position="18"/>
    </location>
    <ligand>
        <name>ATP</name>
        <dbReference type="ChEBI" id="CHEBI:30616"/>
    </ligand>
</feature>
<feature type="binding site" evidence="1">
    <location>
        <position position="42"/>
    </location>
    <ligand>
        <name>substrate</name>
    </ligand>
</feature>
<feature type="binding site" evidence="1">
    <location>
        <position position="74"/>
    </location>
    <ligand>
        <name>substrate</name>
    </ligand>
</feature>
<feature type="binding site" evidence="1">
    <location>
        <position position="88"/>
    </location>
    <ligand>
        <name>substrate</name>
    </ligand>
</feature>
<feature type="binding site" evidence="1">
    <location>
        <begin position="89"/>
        <end position="91"/>
    </location>
    <ligand>
        <name>ATP</name>
        <dbReference type="ChEBI" id="CHEBI:30616"/>
    </ligand>
</feature>
<feature type="binding site" evidence="1">
    <location>
        <position position="99"/>
    </location>
    <ligand>
        <name>ATP</name>
        <dbReference type="ChEBI" id="CHEBI:30616"/>
    </ligand>
</feature>
<feature type="binding site" evidence="1">
    <location>
        <begin position="124"/>
        <end position="130"/>
    </location>
    <ligand>
        <name>ATP</name>
        <dbReference type="ChEBI" id="CHEBI:30616"/>
    </ligand>
</feature>
<feature type="site" description="Transition state stabilizer" evidence="1">
    <location>
        <position position="18"/>
    </location>
</feature>
<protein>
    <recommendedName>
        <fullName evidence="1">Phosphopantetheine adenylyltransferase</fullName>
        <ecNumber evidence="1">2.7.7.3</ecNumber>
    </recommendedName>
    <alternativeName>
        <fullName evidence="1">Dephospho-CoA pyrophosphorylase</fullName>
    </alternativeName>
    <alternativeName>
        <fullName evidence="1">Pantetheine-phosphate adenylyltransferase</fullName>
        <shortName evidence="1">PPAT</shortName>
    </alternativeName>
</protein>
<reference key="1">
    <citation type="journal article" date="2003" name="Proc. Natl. Acad. Sci. U.S.A.">
        <title>Complete genome sequence and analysis of Wolinella succinogenes.</title>
        <authorList>
            <person name="Baar C."/>
            <person name="Eppinger M."/>
            <person name="Raddatz G."/>
            <person name="Simon J."/>
            <person name="Lanz C."/>
            <person name="Klimmek O."/>
            <person name="Nandakumar R."/>
            <person name="Gross R."/>
            <person name="Rosinus A."/>
            <person name="Keller H."/>
            <person name="Jagtap P."/>
            <person name="Linke B."/>
            <person name="Meyer F."/>
            <person name="Lederer H."/>
            <person name="Schuster S.C."/>
        </authorList>
    </citation>
    <scope>NUCLEOTIDE SEQUENCE [LARGE SCALE GENOMIC DNA]</scope>
    <source>
        <strain>ATCC 29543 / DSM 1740 / CCUG 13145 / JCM 31913 / LMG 7466 / NCTC 11488 / FDC 602W</strain>
    </source>
</reference>
<evidence type="ECO:0000255" key="1">
    <source>
        <dbReference type="HAMAP-Rule" id="MF_00151"/>
    </source>
</evidence>
<comment type="function">
    <text evidence="1">Reversibly transfers an adenylyl group from ATP to 4'-phosphopantetheine, yielding dephospho-CoA (dPCoA) and pyrophosphate.</text>
</comment>
<comment type="catalytic activity">
    <reaction evidence="1">
        <text>(R)-4'-phosphopantetheine + ATP + H(+) = 3'-dephospho-CoA + diphosphate</text>
        <dbReference type="Rhea" id="RHEA:19801"/>
        <dbReference type="ChEBI" id="CHEBI:15378"/>
        <dbReference type="ChEBI" id="CHEBI:30616"/>
        <dbReference type="ChEBI" id="CHEBI:33019"/>
        <dbReference type="ChEBI" id="CHEBI:57328"/>
        <dbReference type="ChEBI" id="CHEBI:61723"/>
        <dbReference type="EC" id="2.7.7.3"/>
    </reaction>
</comment>
<comment type="cofactor">
    <cofactor evidence="1">
        <name>Mg(2+)</name>
        <dbReference type="ChEBI" id="CHEBI:18420"/>
    </cofactor>
</comment>
<comment type="pathway">
    <text evidence="1">Cofactor biosynthesis; coenzyme A biosynthesis; CoA from (R)-pantothenate: step 4/5.</text>
</comment>
<comment type="subunit">
    <text evidence="1">Homohexamer.</text>
</comment>
<comment type="subcellular location">
    <subcellularLocation>
        <location evidence="1">Cytoplasm</location>
    </subcellularLocation>
</comment>
<comment type="similarity">
    <text evidence="1">Belongs to the bacterial CoaD family.</text>
</comment>
<name>COAD_WOLSU</name>